<organism>
    <name type="scientific">Bos taurus</name>
    <name type="common">Bovine</name>
    <dbReference type="NCBI Taxonomy" id="9913"/>
    <lineage>
        <taxon>Eukaryota</taxon>
        <taxon>Metazoa</taxon>
        <taxon>Chordata</taxon>
        <taxon>Craniata</taxon>
        <taxon>Vertebrata</taxon>
        <taxon>Euteleostomi</taxon>
        <taxon>Mammalia</taxon>
        <taxon>Eutheria</taxon>
        <taxon>Laurasiatheria</taxon>
        <taxon>Artiodactyla</taxon>
        <taxon>Ruminantia</taxon>
        <taxon>Pecora</taxon>
        <taxon>Bovidae</taxon>
        <taxon>Bovinae</taxon>
        <taxon>Bos</taxon>
    </lineage>
</organism>
<sequence>MRQLKGKPKKETSRDKKERKQAMQEARRQITTVVLPTLAVVVLLIVVFVYVATRPASTE</sequence>
<gene>
    <name type="primary">SMCO4</name>
</gene>
<dbReference type="EMBL" id="BC108154">
    <property type="protein sequence ID" value="AAI08155.1"/>
    <property type="molecule type" value="mRNA"/>
</dbReference>
<dbReference type="RefSeq" id="NP_001289597.1">
    <property type="nucleotide sequence ID" value="NM_001302668.1"/>
</dbReference>
<dbReference type="RefSeq" id="XP_024843070.1">
    <property type="nucleotide sequence ID" value="XM_024987302.2"/>
</dbReference>
<dbReference type="RefSeq" id="XP_024843071.1">
    <property type="nucleotide sequence ID" value="XM_024987303.2"/>
</dbReference>
<dbReference type="RefSeq" id="XP_024843072.1">
    <property type="nucleotide sequence ID" value="XM_024987304.2"/>
</dbReference>
<dbReference type="RefSeq" id="XP_024843073.1">
    <property type="nucleotide sequence ID" value="XM_024987305.2"/>
</dbReference>
<dbReference type="SMR" id="Q32PD9"/>
<dbReference type="FunCoup" id="Q32PD9">
    <property type="interactions" value="127"/>
</dbReference>
<dbReference type="STRING" id="9913.ENSBTAP00000044942"/>
<dbReference type="PaxDb" id="9913-ENSBTAP00000044942"/>
<dbReference type="Ensembl" id="ENSBTAT00000047769.3">
    <property type="protein sequence ID" value="ENSBTAP00000044942.1"/>
    <property type="gene ID" value="ENSBTAG00000033621.3"/>
</dbReference>
<dbReference type="Ensembl" id="ENSBTAT00000099074.1">
    <property type="protein sequence ID" value="ENSBTAP00000075960.1"/>
    <property type="gene ID" value="ENSBTAG00000033621.3"/>
</dbReference>
<dbReference type="Ensembl" id="ENSBTAT00000101549.1">
    <property type="protein sequence ID" value="ENSBTAP00000084172.1"/>
    <property type="gene ID" value="ENSBTAG00000033621.3"/>
</dbReference>
<dbReference type="Ensembl" id="ENSBTAT00000102677.1">
    <property type="protein sequence ID" value="ENSBTAP00000094775.1"/>
    <property type="gene ID" value="ENSBTAG00000033621.3"/>
</dbReference>
<dbReference type="Ensembl" id="ENSBTAT00000104259.1">
    <property type="protein sequence ID" value="ENSBTAP00000090313.1"/>
    <property type="gene ID" value="ENSBTAG00000033621.3"/>
</dbReference>
<dbReference type="Ensembl" id="ENSBTAT00000109177.1">
    <property type="protein sequence ID" value="ENSBTAP00000074909.1"/>
    <property type="gene ID" value="ENSBTAG00000033621.3"/>
</dbReference>
<dbReference type="Ensembl" id="ENSBTAT00000110761.1">
    <property type="protein sequence ID" value="ENSBTAP00000097048.1"/>
    <property type="gene ID" value="ENSBTAG00000033621.3"/>
</dbReference>
<dbReference type="Ensembl" id="ENSBTAT00000115673.1">
    <property type="protein sequence ID" value="ENSBTAP00000080603.1"/>
    <property type="gene ID" value="ENSBTAG00000033621.3"/>
</dbReference>
<dbReference type="Ensembl" id="ENSBTAT00000125748.1">
    <property type="protein sequence ID" value="ENSBTAP00000094231.1"/>
    <property type="gene ID" value="ENSBTAG00000033621.3"/>
</dbReference>
<dbReference type="Ensembl" id="ENSBTAT00000126071.1">
    <property type="protein sequence ID" value="ENSBTAP00000084977.1"/>
    <property type="gene ID" value="ENSBTAG00000033621.3"/>
</dbReference>
<dbReference type="GeneID" id="614071"/>
<dbReference type="KEGG" id="bta:614071"/>
<dbReference type="CTD" id="56935"/>
<dbReference type="VEuPathDB" id="HostDB:ENSBTAG00000033621"/>
<dbReference type="VGNC" id="VGNC:35008">
    <property type="gene designation" value="SMCO4"/>
</dbReference>
<dbReference type="eggNOG" id="ENOG502S7F4">
    <property type="taxonomic scope" value="Eukaryota"/>
</dbReference>
<dbReference type="GeneTree" id="ENSGT00390000015987"/>
<dbReference type="HOGENOM" id="CLU_209950_0_0_1"/>
<dbReference type="InParanoid" id="Q32PD9"/>
<dbReference type="OMA" id="FFIYANT"/>
<dbReference type="OrthoDB" id="10632711at2759"/>
<dbReference type="TreeFam" id="TF324415"/>
<dbReference type="Proteomes" id="UP000009136">
    <property type="component" value="Chromosome 29"/>
</dbReference>
<dbReference type="Bgee" id="ENSBTAG00000033621">
    <property type="expression patterns" value="Expressed in parenchyma of mammary gland and 108 other cell types or tissues"/>
</dbReference>
<dbReference type="GO" id="GO:0016020">
    <property type="term" value="C:membrane"/>
    <property type="evidence" value="ECO:0007669"/>
    <property type="project" value="UniProtKB-SubCell"/>
</dbReference>
<dbReference type="InterPro" id="IPR027960">
    <property type="entry name" value="DUF4519"/>
</dbReference>
<dbReference type="PANTHER" id="PTHR34644">
    <property type="entry name" value="SINGLE-PASS MEMBRANE AND COILED-COIL DOMAIN-CONTAINING PROTEIN 4"/>
    <property type="match status" value="1"/>
</dbReference>
<dbReference type="PANTHER" id="PTHR34644:SF2">
    <property type="entry name" value="SINGLE-PASS MEMBRANE AND COILED-COIL DOMAIN-CONTAINING PROTEIN 4"/>
    <property type="match status" value="1"/>
</dbReference>
<dbReference type="Pfam" id="PF15012">
    <property type="entry name" value="DUF4519"/>
    <property type="match status" value="1"/>
</dbReference>
<proteinExistence type="inferred from homology"/>
<comment type="subcellular location">
    <subcellularLocation>
        <location evidence="3">Membrane</location>
        <topology evidence="3">Single-pass membrane protein</topology>
    </subcellularLocation>
</comment>
<comment type="similarity">
    <text evidence="3">Belongs to the SMCO4 family.</text>
</comment>
<keyword id="KW-0175">Coiled coil</keyword>
<keyword id="KW-0472">Membrane</keyword>
<keyword id="KW-1185">Reference proteome</keyword>
<keyword id="KW-0812">Transmembrane</keyword>
<keyword id="KW-1133">Transmembrane helix</keyword>
<reference key="1">
    <citation type="submission" date="2005-10" db="EMBL/GenBank/DDBJ databases">
        <authorList>
            <consortium name="NIH - Mammalian Gene Collection (MGC) project"/>
        </authorList>
    </citation>
    <scope>NUCLEOTIDE SEQUENCE [LARGE SCALE MRNA]</scope>
    <source>
        <strain>Crossbred X Angus</strain>
        <tissue>Liver</tissue>
    </source>
</reference>
<evidence type="ECO:0000255" key="1"/>
<evidence type="ECO:0000256" key="2">
    <source>
        <dbReference type="SAM" id="MobiDB-lite"/>
    </source>
</evidence>
<evidence type="ECO:0000305" key="3"/>
<feature type="chain" id="PRO_0000293700" description="Single-pass membrane and coiled-coil domain-containing protein 4">
    <location>
        <begin position="1"/>
        <end position="59"/>
    </location>
</feature>
<feature type="transmembrane region" description="Helical" evidence="1">
    <location>
        <begin position="32"/>
        <end position="52"/>
    </location>
</feature>
<feature type="region of interest" description="Disordered" evidence="2">
    <location>
        <begin position="1"/>
        <end position="27"/>
    </location>
</feature>
<feature type="coiled-coil region" evidence="1">
    <location>
        <begin position="9"/>
        <end position="31"/>
    </location>
</feature>
<feature type="compositionally biased region" description="Basic and acidic residues" evidence="2">
    <location>
        <begin position="9"/>
        <end position="27"/>
    </location>
</feature>
<protein>
    <recommendedName>
        <fullName>Single-pass membrane and coiled-coil domain-containing protein 4</fullName>
    </recommendedName>
</protein>
<accession>Q32PD9</accession>
<name>SMCO4_BOVIN</name>